<reference key="1">
    <citation type="journal article" date="1998" name="Genetics">
        <title>Fission yeast cdc24(+) encodes a novel replication factor required for chromosome integrity.</title>
        <authorList>
            <person name="Gould K.L."/>
            <person name="Burns C.G."/>
            <person name="Feoktistova A."/>
            <person name="Hu C.-P."/>
            <person name="Pasion S.G."/>
            <person name="Forsburg S.L."/>
        </authorList>
    </citation>
    <scope>NUCLEOTIDE SEQUENCE [GENOMIC DNA]</scope>
    <scope>FUNCTION</scope>
    <source>
        <strain>972 / ATCC 24843</strain>
    </source>
</reference>
<reference key="2">
    <citation type="journal article" date="1999" name="Mol. Cell. Biol.">
        <title>Fission yeast cdc24 is a replication factor C- and proliferating cell nuclear antigen-interacting factor essential for S-phase completion.</title>
        <authorList>
            <person name="Tanaka H."/>
            <person name="Tanaka K."/>
            <person name="Murakami H."/>
            <person name="Okayama H."/>
        </authorList>
    </citation>
    <scope>NUCLEOTIDE SEQUENCE [MRNA]</scope>
    <scope>FUNCTION</scope>
    <scope>INTERACTION WITH PNC1 AND RFC1</scope>
</reference>
<reference key="3">
    <citation type="journal article" date="2002" name="Nature">
        <title>The genome sequence of Schizosaccharomyces pombe.</title>
        <authorList>
            <person name="Wood V."/>
            <person name="Gwilliam R."/>
            <person name="Rajandream M.A."/>
            <person name="Lyne M.H."/>
            <person name="Lyne R."/>
            <person name="Stewart A."/>
            <person name="Sgouros J.G."/>
            <person name="Peat N."/>
            <person name="Hayles J."/>
            <person name="Baker S.G."/>
            <person name="Basham D."/>
            <person name="Bowman S."/>
            <person name="Brooks K."/>
            <person name="Brown D."/>
            <person name="Brown S."/>
            <person name="Chillingworth T."/>
            <person name="Churcher C.M."/>
            <person name="Collins M."/>
            <person name="Connor R."/>
            <person name="Cronin A."/>
            <person name="Davis P."/>
            <person name="Feltwell T."/>
            <person name="Fraser A."/>
            <person name="Gentles S."/>
            <person name="Goble A."/>
            <person name="Hamlin N."/>
            <person name="Harris D.E."/>
            <person name="Hidalgo J."/>
            <person name="Hodgson G."/>
            <person name="Holroyd S."/>
            <person name="Hornsby T."/>
            <person name="Howarth S."/>
            <person name="Huckle E.J."/>
            <person name="Hunt S."/>
            <person name="Jagels K."/>
            <person name="James K.D."/>
            <person name="Jones L."/>
            <person name="Jones M."/>
            <person name="Leather S."/>
            <person name="McDonald S."/>
            <person name="McLean J."/>
            <person name="Mooney P."/>
            <person name="Moule S."/>
            <person name="Mungall K.L."/>
            <person name="Murphy L.D."/>
            <person name="Niblett D."/>
            <person name="Odell C."/>
            <person name="Oliver K."/>
            <person name="O'Neil S."/>
            <person name="Pearson D."/>
            <person name="Quail M.A."/>
            <person name="Rabbinowitsch E."/>
            <person name="Rutherford K.M."/>
            <person name="Rutter S."/>
            <person name="Saunders D."/>
            <person name="Seeger K."/>
            <person name="Sharp S."/>
            <person name="Skelton J."/>
            <person name="Simmonds M.N."/>
            <person name="Squares R."/>
            <person name="Squares S."/>
            <person name="Stevens K."/>
            <person name="Taylor K."/>
            <person name="Taylor R.G."/>
            <person name="Tivey A."/>
            <person name="Walsh S.V."/>
            <person name="Warren T."/>
            <person name="Whitehead S."/>
            <person name="Woodward J.R."/>
            <person name="Volckaert G."/>
            <person name="Aert R."/>
            <person name="Robben J."/>
            <person name="Grymonprez B."/>
            <person name="Weltjens I."/>
            <person name="Vanstreels E."/>
            <person name="Rieger M."/>
            <person name="Schaefer M."/>
            <person name="Mueller-Auer S."/>
            <person name="Gabel C."/>
            <person name="Fuchs M."/>
            <person name="Duesterhoeft A."/>
            <person name="Fritzc C."/>
            <person name="Holzer E."/>
            <person name="Moestl D."/>
            <person name="Hilbert H."/>
            <person name="Borzym K."/>
            <person name="Langer I."/>
            <person name="Beck A."/>
            <person name="Lehrach H."/>
            <person name="Reinhardt R."/>
            <person name="Pohl T.M."/>
            <person name="Eger P."/>
            <person name="Zimmermann W."/>
            <person name="Wedler H."/>
            <person name="Wambutt R."/>
            <person name="Purnelle B."/>
            <person name="Goffeau A."/>
            <person name="Cadieu E."/>
            <person name="Dreano S."/>
            <person name="Gloux S."/>
            <person name="Lelaure V."/>
            <person name="Mottier S."/>
            <person name="Galibert F."/>
            <person name="Aves S.J."/>
            <person name="Xiang Z."/>
            <person name="Hunt C."/>
            <person name="Moore K."/>
            <person name="Hurst S.M."/>
            <person name="Lucas M."/>
            <person name="Rochet M."/>
            <person name="Gaillardin C."/>
            <person name="Tallada V.A."/>
            <person name="Garzon A."/>
            <person name="Thode G."/>
            <person name="Daga R.R."/>
            <person name="Cruzado L."/>
            <person name="Jimenez J."/>
            <person name="Sanchez M."/>
            <person name="del Rey F."/>
            <person name="Benito J."/>
            <person name="Dominguez A."/>
            <person name="Revuelta J.L."/>
            <person name="Moreno S."/>
            <person name="Armstrong J."/>
            <person name="Forsburg S.L."/>
            <person name="Cerutti L."/>
            <person name="Lowe T."/>
            <person name="McCombie W.R."/>
            <person name="Paulsen I."/>
            <person name="Potashkin J."/>
            <person name="Shpakovski G.V."/>
            <person name="Ussery D."/>
            <person name="Barrell B.G."/>
            <person name="Nurse P."/>
        </authorList>
    </citation>
    <scope>NUCLEOTIDE SEQUENCE [LARGE SCALE GENOMIC DNA]</scope>
    <source>
        <strain>972 / ATCC 24843</strain>
    </source>
</reference>
<reference key="4">
    <citation type="journal article" date="2004" name="Nucleic Acids Res.">
        <title>Genetics of lagging strand DNA synthesis and maturation in fission yeast: suppression analysis links the Dna2-Cdc24 complex to DNA polymerase delta.</title>
        <authorList>
            <person name="Tanaka H."/>
            <person name="Ryu G.H."/>
            <person name="Seo Y.S."/>
            <person name="MacNeill S.A."/>
        </authorList>
    </citation>
    <scope>FUNCTION</scope>
    <scope>INTERACTION WITH DNA2</scope>
</reference>
<reference key="5">
    <citation type="journal article" date="2006" name="Nat. Biotechnol.">
        <title>ORFeome cloning and global analysis of protein localization in the fission yeast Schizosaccharomyces pombe.</title>
        <authorList>
            <person name="Matsuyama A."/>
            <person name="Arai R."/>
            <person name="Yashiroda Y."/>
            <person name="Shirai A."/>
            <person name="Kamata A."/>
            <person name="Sekido S."/>
            <person name="Kobayashi Y."/>
            <person name="Hashimoto A."/>
            <person name="Hamamoto M."/>
            <person name="Hiraoka Y."/>
            <person name="Horinouchi S."/>
            <person name="Yoshida M."/>
        </authorList>
    </citation>
    <scope>SUBCELLULAR LOCATION [LARGE SCALE ANALYSIS]</scope>
</reference>
<gene>
    <name type="primary">cdc24</name>
    <name type="ORF">SPAC8F11.07c</name>
</gene>
<evidence type="ECO:0000269" key="1">
    <source>
    </source>
</evidence>
<evidence type="ECO:0000269" key="2">
    <source>
    </source>
</evidence>
<evidence type="ECO:0000269" key="3">
    <source>
    </source>
</evidence>
<evidence type="ECO:0000269" key="4">
    <source>
    </source>
</evidence>
<dbReference type="EMBL" id="AF085329">
    <property type="protein sequence ID" value="AAC34684.1"/>
    <property type="molecule type" value="Genomic_DNA"/>
</dbReference>
<dbReference type="EMBL" id="AB015436">
    <property type="protein sequence ID" value="BAA28896.1"/>
    <property type="molecule type" value="mRNA"/>
</dbReference>
<dbReference type="EMBL" id="CU329670">
    <property type="protein sequence ID" value="CAB52168.1"/>
    <property type="molecule type" value="Genomic_DNA"/>
</dbReference>
<dbReference type="PIR" id="T43375">
    <property type="entry name" value="T43375"/>
</dbReference>
<dbReference type="RefSeq" id="NP_593956.1">
    <property type="nucleotide sequence ID" value="NM_001019383.2"/>
</dbReference>
<dbReference type="BioGRID" id="279829">
    <property type="interactions" value="26"/>
</dbReference>
<dbReference type="DIP" id="DIP-39146N"/>
<dbReference type="FunCoup" id="O75004">
    <property type="interactions" value="7"/>
</dbReference>
<dbReference type="IntAct" id="O75004">
    <property type="interactions" value="6"/>
</dbReference>
<dbReference type="MINT" id="O75004"/>
<dbReference type="STRING" id="284812.O75004"/>
<dbReference type="PaxDb" id="4896-SPAC8F11.07c.1"/>
<dbReference type="EnsemblFungi" id="SPAC8F11.07c.1">
    <property type="protein sequence ID" value="SPAC8F11.07c.1:pep"/>
    <property type="gene ID" value="SPAC8F11.07c"/>
</dbReference>
<dbReference type="GeneID" id="2543407"/>
<dbReference type="KEGG" id="spo:2543407"/>
<dbReference type="PomBase" id="SPAC8F11.07c">
    <property type="gene designation" value="cdc24"/>
</dbReference>
<dbReference type="VEuPathDB" id="FungiDB:SPAC8F11.07c"/>
<dbReference type="HOGENOM" id="CLU_551139_0_0_1"/>
<dbReference type="InParanoid" id="O75004"/>
<dbReference type="OMA" id="YHEDRFS"/>
<dbReference type="PRO" id="PR:O75004"/>
<dbReference type="Proteomes" id="UP000002485">
    <property type="component" value="Chromosome I"/>
</dbReference>
<dbReference type="GO" id="GO:0032153">
    <property type="term" value="C:cell division site"/>
    <property type="evidence" value="ECO:0007005"/>
    <property type="project" value="PomBase"/>
</dbReference>
<dbReference type="GO" id="GO:0005737">
    <property type="term" value="C:cytoplasm"/>
    <property type="evidence" value="ECO:0000314"/>
    <property type="project" value="PomBase"/>
</dbReference>
<dbReference type="GO" id="GO:0005829">
    <property type="term" value="C:cytosol"/>
    <property type="evidence" value="ECO:0007005"/>
    <property type="project" value="PomBase"/>
</dbReference>
<dbReference type="GO" id="GO:0043596">
    <property type="term" value="C:nuclear replication fork"/>
    <property type="evidence" value="ECO:0000305"/>
    <property type="project" value="PomBase"/>
</dbReference>
<dbReference type="GO" id="GO:0005654">
    <property type="term" value="C:nucleoplasm"/>
    <property type="evidence" value="ECO:0000314"/>
    <property type="project" value="PomBase"/>
</dbReference>
<dbReference type="GO" id="GO:0005634">
    <property type="term" value="C:nucleus"/>
    <property type="evidence" value="ECO:0007005"/>
    <property type="project" value="PomBase"/>
</dbReference>
<dbReference type="GO" id="GO:0035861">
    <property type="term" value="C:site of double-strand break"/>
    <property type="evidence" value="ECO:0000314"/>
    <property type="project" value="PomBase"/>
</dbReference>
<dbReference type="GO" id="GO:0000724">
    <property type="term" value="P:double-strand break repair via homologous recombination"/>
    <property type="evidence" value="ECO:0000269"/>
    <property type="project" value="PomBase"/>
</dbReference>
<dbReference type="GO" id="GO:1903461">
    <property type="term" value="P:Okazaki fragment processing involved in mitotic DNA replication"/>
    <property type="evidence" value="ECO:0000353"/>
    <property type="project" value="PomBase"/>
</dbReference>
<dbReference type="InterPro" id="IPR035201">
    <property type="entry name" value="Cdc24_OB1"/>
</dbReference>
<dbReference type="InterPro" id="IPR035200">
    <property type="entry name" value="Cdc24_OB2"/>
</dbReference>
<dbReference type="InterPro" id="IPR035203">
    <property type="entry name" value="Cdc24_OB3"/>
</dbReference>
<dbReference type="Pfam" id="PF17246">
    <property type="entry name" value="CDC24_OB1"/>
    <property type="match status" value="1"/>
</dbReference>
<dbReference type="Pfam" id="PF17245">
    <property type="entry name" value="CDC24_OB2"/>
    <property type="match status" value="1"/>
</dbReference>
<dbReference type="Pfam" id="PF17244">
    <property type="entry name" value="CDC24_OB3"/>
    <property type="match status" value="1"/>
</dbReference>
<proteinExistence type="evidence at protein level"/>
<organism>
    <name type="scientific">Schizosaccharomyces pombe (strain 972 / ATCC 24843)</name>
    <name type="common">Fission yeast</name>
    <dbReference type="NCBI Taxonomy" id="284812"/>
    <lineage>
        <taxon>Eukaryota</taxon>
        <taxon>Fungi</taxon>
        <taxon>Dikarya</taxon>
        <taxon>Ascomycota</taxon>
        <taxon>Taphrinomycotina</taxon>
        <taxon>Schizosaccharomycetes</taxon>
        <taxon>Schizosaccharomycetales</taxon>
        <taxon>Schizosaccharomycetaceae</taxon>
        <taxon>Schizosaccharomyces</taxon>
    </lineage>
</organism>
<feature type="chain" id="PRO_0000089445" description="Cell division control protein 24">
    <location>
        <begin position="1"/>
        <end position="501"/>
    </location>
</feature>
<accession>O75004</accession>
<protein>
    <recommendedName>
        <fullName>Cell division control protein 24</fullName>
    </recommendedName>
</protein>
<keyword id="KW-0131">Cell cycle</keyword>
<keyword id="KW-0963">Cytoplasm</keyword>
<keyword id="KW-0539">Nucleus</keyword>
<keyword id="KW-1185">Reference proteome</keyword>
<comment type="function">
    <text evidence="1 3 4">Has a role in the progression of DNA replication and in the maintenance of genomic integrity. Acts during S phase, after initiation, where it is essential for completion.</text>
</comment>
<comment type="subunit">
    <text evidence="1 4">Interacts with dna2, pcn1 and rfc1.</text>
</comment>
<comment type="interaction">
    <interactant intactId="EBI-1559355">
        <id>O75004</id>
    </interactant>
    <interactant intactId="EBI-16120355">
        <id>Q9URU2</id>
        <label>dna2</label>
    </interactant>
    <organismsDiffer>false</organismsDiffer>
    <experiments>3</experiments>
</comment>
<comment type="interaction">
    <interactant intactId="EBI-1559355">
        <id>O75004</id>
    </interactant>
    <interactant intactId="EBI-16120313">
        <id>Q9UUA8</id>
        <label>SPBC409.16c</label>
    </interactant>
    <organismsDiffer>false</organismsDiffer>
    <experiments>3</experiments>
</comment>
<comment type="interaction">
    <interactant intactId="EBI-1559355">
        <id>O75004</id>
    </interactant>
    <interactant intactId="EBI-16120253">
        <id>O94542</id>
        <label>SPCC1322.02</label>
    </interactant>
    <organismsDiffer>false</organismsDiffer>
    <experiments>5</experiments>
</comment>
<comment type="subcellular location">
    <subcellularLocation>
        <location evidence="2">Nucleus</location>
    </subcellularLocation>
    <subcellularLocation>
        <location evidence="2">Cytoplasm</location>
    </subcellularLocation>
</comment>
<name>CDC24_SCHPO</name>
<sequence length="501" mass="58043">MDFPGLIKKIKEDLENRLVEKSKQPAFTDYWLINKTISLLKEYPSGFSYPILINEIELACSERNKLDNVFSSLEWLTKSDAVIYLEDQFHFHCYDYYYTPIPSLKLKDSEENTCEMILHSSFYLLFHEPFNILKGSTLRFSQSRIHQKWYLRKQIRFLPTTSFVPVLQYAASKSFVKSMVESTEHEFFQIRDITISKSDQGVKRITVELGRIISLDKKGAFLIDNNTNFIHFSGTYHDFPKLLDKQQYLLIPFWSTVWEGSTNWQDGMIGILVILSENDFEEKKCDSWQVGRLAAVNSNFLVLDNNGQRVKILYSNSQKHYFKDTYIGDLLCISPINHSSDNLSDYSCVSDTTTEILSNLENPLSSNFLRNDLCKFSNLFSGVSGHLKIQPLTLVITGFVANLTRQSDLNTSLVLPEVNPLTAKMEVIDCLRNSFWAALRPNCVSYFASMISGFKELFQKEMEFPIYLDLKSYKLGFHWCDIYVDSEHNCHIQKINSLPCE</sequence>